<organism>
    <name type="scientific">Saccharomyces cerevisiae (strain ATCC 204508 / S288c)</name>
    <name type="common">Baker's yeast</name>
    <dbReference type="NCBI Taxonomy" id="559292"/>
    <lineage>
        <taxon>Eukaryota</taxon>
        <taxon>Fungi</taxon>
        <taxon>Dikarya</taxon>
        <taxon>Ascomycota</taxon>
        <taxon>Saccharomycotina</taxon>
        <taxon>Saccharomycetes</taxon>
        <taxon>Saccharomycetales</taxon>
        <taxon>Saccharomycetaceae</taxon>
        <taxon>Saccharomyces</taxon>
    </lineage>
</organism>
<keyword id="KW-0002">3D-structure</keyword>
<keyword id="KW-0010">Activator</keyword>
<keyword id="KW-0156">Chromatin regulator</keyword>
<keyword id="KW-0175">Coiled coil</keyword>
<keyword id="KW-0963">Cytoplasm</keyword>
<keyword id="KW-0227">DNA damage</keyword>
<keyword id="KW-0234">DNA repair</keyword>
<keyword id="KW-0539">Nucleus</keyword>
<keyword id="KW-1185">Reference proteome</keyword>
<keyword id="KW-0804">Transcription</keyword>
<keyword id="KW-0805">Transcription regulation</keyword>
<comment type="function">
    <text evidence="3 5 6 7 10">Component of the SWR1 complex which mediates the ATP-dependent exchange of histone H2A for the H2A variant HZT1 leading to transcriptional regulation of selected genes by chromatin remodeling. Component of the NuA4 histone acetyltransferase complex which is involved in transcriptional activation of selected genes principally by acetylation of nucleosomal histones H4 and H2A. The NuA4 complex is also involved in DNA repair. Yaf9 may also be required for viability in conditions in which the structural integrity of the spindle is compromised.</text>
</comment>
<comment type="subunit">
    <text evidence="3 5 6 7 8 9 10">Component of the SWR1 chromatin-remodeling complex composed of at least ACT1, ARP4, RVB1, RVB2, ARP6, YAF9, VPS71, VPS72, SWC3, SWC4, SWC5, SWC7 and SWR1, and perhaps BDF1. Component of the NuA4 histone acetyltransferase complex composed of at least ACT1, ARP4, YAF9, VID21, SWC4, EAF3, EAF5, EAF6, EAF7, EPL1, ESA1, TRA1 and YNG2. Interacts with SWC4.</text>
</comment>
<comment type="interaction">
    <interactant intactId="EBI-28841">
        <id>P53930</id>
    </interactant>
    <interactant intactId="EBI-3493">
        <id>P35817</id>
        <label>BDF1</label>
    </interactant>
    <organismsDiffer>false</organismsDiffer>
    <experiments>4</experiments>
</comment>
<comment type="subcellular location">
    <subcellularLocation>
        <location>Cytoplasm</location>
    </subcellularLocation>
    <subcellularLocation>
        <location>Nucleus</location>
    </subcellularLocation>
</comment>
<comment type="domain">
    <text>The coiled-coil domain is required for assembly into the NuA4 complex.</text>
</comment>
<comment type="miscellaneous">
    <text evidence="4">Present with 259 molecules/cell in log phase SD medium.</text>
</comment>
<protein>
    <recommendedName>
        <fullName>Protein AF-9 homolog</fullName>
    </recommendedName>
</protein>
<accession>P53930</accession>
<accession>D6W173</accession>
<accession>Q6B1N1</accession>
<reference key="1">
    <citation type="journal article" date="1997" name="Yeast">
        <title>The DNA sequence of cosmid 14-13b from chromosome XIV of Saccharomyces cerevisiae reveals an unusually high number of overlapping open reading frames.</title>
        <authorList>
            <person name="de Antoni A."/>
            <person name="D'Angelo M."/>
            <person name="Dal Pero F."/>
            <person name="Sartorello F."/>
            <person name="Pandolfo D."/>
            <person name="Pallavicini A."/>
            <person name="Lanfranchi G."/>
            <person name="Valle G."/>
        </authorList>
    </citation>
    <scope>NUCLEOTIDE SEQUENCE [LARGE SCALE GENOMIC DNA]</scope>
</reference>
<reference key="2">
    <citation type="journal article" date="2014" name="G3 (Bethesda)">
        <title>The reference genome sequence of Saccharomyces cerevisiae: Then and now.</title>
        <authorList>
            <person name="Engel S.R."/>
            <person name="Dietrich F.S."/>
            <person name="Fisk D.G."/>
            <person name="Binkley G."/>
            <person name="Balakrishnan R."/>
            <person name="Costanzo M.C."/>
            <person name="Dwight S.S."/>
            <person name="Hitz B.C."/>
            <person name="Karra K."/>
            <person name="Nash R.S."/>
            <person name="Weng S."/>
            <person name="Wong E.D."/>
            <person name="Lloyd P."/>
            <person name="Skrzypek M.S."/>
            <person name="Miyasato S.R."/>
            <person name="Simison M."/>
            <person name="Cherry J.M."/>
        </authorList>
    </citation>
    <scope>GENOME REANNOTATION</scope>
    <source>
        <strain>ATCC 204508 / S288c</strain>
    </source>
</reference>
<reference key="3">
    <citation type="journal article" date="1997" name="Nature">
        <title>The nucleotide sequence of Saccharomyces cerevisiae chromosome XIV and its evolutionary implications.</title>
        <authorList>
            <person name="Philippsen P."/>
            <person name="Kleine K."/>
            <person name="Poehlmann R."/>
            <person name="Duesterhoeft A."/>
            <person name="Hamberg K."/>
            <person name="Hegemann J.H."/>
            <person name="Obermaier B."/>
            <person name="Urrestarazu L.A."/>
            <person name="Aert R."/>
            <person name="Albermann K."/>
            <person name="Altmann R."/>
            <person name="Andre B."/>
            <person name="Baladron V."/>
            <person name="Ballesta J.P.G."/>
            <person name="Becam A.-M."/>
            <person name="Beinhauer J.D."/>
            <person name="Boskovic J."/>
            <person name="Buitrago M.J."/>
            <person name="Bussereau F."/>
            <person name="Coster F."/>
            <person name="Crouzet M."/>
            <person name="D'Angelo M."/>
            <person name="Dal Pero F."/>
            <person name="De Antoni A."/>
            <person name="del Rey F."/>
            <person name="Doignon F."/>
            <person name="Domdey H."/>
            <person name="Dubois E."/>
            <person name="Fiedler T.A."/>
            <person name="Fleig U."/>
            <person name="Floeth M."/>
            <person name="Fritz C."/>
            <person name="Gaillardin C."/>
            <person name="Garcia-Cantalejo J.M."/>
            <person name="Glansdorff N."/>
            <person name="Goffeau A."/>
            <person name="Gueldener U."/>
            <person name="Herbert C.J."/>
            <person name="Heumann K."/>
            <person name="Heuss-Neitzel D."/>
            <person name="Hilbert H."/>
            <person name="Hinni K."/>
            <person name="Iraqui Houssaini I."/>
            <person name="Jacquet M."/>
            <person name="Jimenez A."/>
            <person name="Jonniaux J.-L."/>
            <person name="Karpfinger-Hartl L."/>
            <person name="Lanfranchi G."/>
            <person name="Lepingle A."/>
            <person name="Levesque H."/>
            <person name="Lyck R."/>
            <person name="Maftahi M."/>
            <person name="Mallet L."/>
            <person name="Maurer C.T.C."/>
            <person name="Messenguy F."/>
            <person name="Mewes H.-W."/>
            <person name="Moestl D."/>
            <person name="Nasr F."/>
            <person name="Nicaud J.-M."/>
            <person name="Niedenthal R.K."/>
            <person name="Pandolfo D."/>
            <person name="Pierard A."/>
            <person name="Piravandi E."/>
            <person name="Planta R.J."/>
            <person name="Pohl T.M."/>
            <person name="Purnelle B."/>
            <person name="Rebischung C."/>
            <person name="Remacha M.A."/>
            <person name="Revuelta J.L."/>
            <person name="Rinke M."/>
            <person name="Saiz J.E."/>
            <person name="Sartorello F."/>
            <person name="Scherens B."/>
            <person name="Sen-Gupta M."/>
            <person name="Soler-Mira A."/>
            <person name="Urbanus J.H.M."/>
            <person name="Valle G."/>
            <person name="Van Dyck L."/>
            <person name="Verhasselt P."/>
            <person name="Vierendeels F."/>
            <person name="Vissers S."/>
            <person name="Voet M."/>
            <person name="Volckaert G."/>
            <person name="Wach A."/>
            <person name="Wambutt R."/>
            <person name="Wedler H."/>
            <person name="Zollner A."/>
            <person name="Hani J."/>
        </authorList>
    </citation>
    <scope>NUCLEOTIDE SEQUENCE [LARGE SCALE GENOMIC DNA]</scope>
    <source>
        <strain>ATCC 204508 / S288c</strain>
    </source>
</reference>
<reference key="4">
    <citation type="journal article" date="2007" name="Genome Res.">
        <title>Approaching a complete repository of sequence-verified protein-encoding clones for Saccharomyces cerevisiae.</title>
        <authorList>
            <person name="Hu Y."/>
            <person name="Rolfs A."/>
            <person name="Bhullar B."/>
            <person name="Murthy T.V.S."/>
            <person name="Zhu C."/>
            <person name="Berger M.F."/>
            <person name="Camargo A.A."/>
            <person name="Kelley F."/>
            <person name="McCarron S."/>
            <person name="Jepson D."/>
            <person name="Richardson A."/>
            <person name="Raphael J."/>
            <person name="Moreira D."/>
            <person name="Taycher E."/>
            <person name="Zuo D."/>
            <person name="Mohr S."/>
            <person name="Kane M.F."/>
            <person name="Williamson J."/>
            <person name="Simpson A.J.G."/>
            <person name="Bulyk M.L."/>
            <person name="Harlow E."/>
            <person name="Marsischky G."/>
            <person name="Kolodner R.D."/>
            <person name="LaBaer J."/>
        </authorList>
    </citation>
    <scope>NUCLEOTIDE SEQUENCE [GENOMIC DNA]</scope>
    <source>
        <strain>ATCC 204508 / S288c</strain>
    </source>
</reference>
<reference key="5">
    <citation type="journal article" date="2003" name="Mol. Cell">
        <title>Assigning function to yeast proteins by integration of technologies.</title>
        <authorList>
            <person name="Hazbun T.R."/>
            <person name="Malmstroem L."/>
            <person name="Anderson S."/>
            <person name="Graczyk B.J."/>
            <person name="Fox B."/>
            <person name="Riffle M."/>
            <person name="Sundin B.A."/>
            <person name="Aranda J.D."/>
            <person name="McDonald W.H."/>
            <person name="Chiu C.-H."/>
            <person name="Snydsman B.E."/>
            <person name="Bradley P."/>
            <person name="Muller E.G.D."/>
            <person name="Fields S."/>
            <person name="Baker D."/>
            <person name="Yates J.R. III"/>
            <person name="Davis T.N."/>
        </authorList>
    </citation>
    <scope>IDENTIFICATION BY MASS SPECTROMETRY</scope>
</reference>
<reference key="6">
    <citation type="journal article" date="2003" name="Mol. Cell">
        <title>A Snf2 family ATPase complex required for recruitment of the histone H2A variant Htz1.</title>
        <authorList>
            <person name="Krogan N.J."/>
            <person name="Keogh M.-C."/>
            <person name="Datta N."/>
            <person name="Sawa C."/>
            <person name="Ryan O.W."/>
            <person name="Ding H."/>
            <person name="Haw R.A."/>
            <person name="Pootoolal J."/>
            <person name="Tong A."/>
            <person name="Canadien V."/>
            <person name="Richards D.P."/>
            <person name="Wu X."/>
            <person name="Emili A."/>
            <person name="Hughes T.R."/>
            <person name="Buratowski S."/>
            <person name="Greenblatt J.F."/>
        </authorList>
    </citation>
    <scope>IDENTIFICATION IN THE SWR1 COMPLEX</scope>
    <scope>FUNCTION OF THE SWR1 COMPLEX</scope>
    <scope>IDENTIFICATION BY MASS SPECTROMETRY</scope>
</reference>
<reference key="7">
    <citation type="journal article" date="2003" name="Mol. Cell. Biol.">
        <title>Yaf9, a novel NuA4 histone acetyltransferase subunit, is required for the cellular response to spindle stress in yeast.</title>
        <authorList>
            <person name="Le Masson I."/>
            <person name="Yu D.Y."/>
            <person name="Jensen K."/>
            <person name="Chevalier A."/>
            <person name="Courbeyrette R."/>
            <person name="Boulard Y."/>
            <person name="Smith M.M."/>
            <person name="Mann C."/>
        </authorList>
    </citation>
    <scope>FUNCTION</scope>
    <scope>SUBCELLULAR LOCATION</scope>
    <scope>IDENTIFICATION IN THE NUA4 COMPLEX</scope>
</reference>
<reference key="8">
    <citation type="journal article" date="2003" name="Nature">
        <title>Global analysis of protein localization in budding yeast.</title>
        <authorList>
            <person name="Huh W.-K."/>
            <person name="Falvo J.V."/>
            <person name="Gerke L.C."/>
            <person name="Carroll A.S."/>
            <person name="Howson R.W."/>
            <person name="Weissman J.S."/>
            <person name="O'Shea E.K."/>
        </authorList>
    </citation>
    <scope>SUBCELLULAR LOCATION [LARGE SCALE ANALYSIS]</scope>
</reference>
<reference key="9">
    <citation type="journal article" date="2003" name="Nature">
        <title>Global analysis of protein expression in yeast.</title>
        <authorList>
            <person name="Ghaemmaghami S."/>
            <person name="Huh W.-K."/>
            <person name="Bower K."/>
            <person name="Howson R.W."/>
            <person name="Belle A."/>
            <person name="Dephoure N."/>
            <person name="O'Shea E.K."/>
            <person name="Weissman J.S."/>
        </authorList>
    </citation>
    <scope>LEVEL OF PROTEIN EXPRESSION [LARGE SCALE ANALYSIS]</scope>
</reference>
<reference key="10">
    <citation type="journal article" date="2004" name="Eukaryot. Cell">
        <title>Direct physical and functional interaction of the NuA4 complex components Yaf9p and Swc4p.</title>
        <authorList>
            <person name="Bittner C.B."/>
            <person name="Zeisig D.T."/>
            <person name="Zeisig B.B."/>
            <person name="Slany R.K."/>
        </authorList>
    </citation>
    <scope>INTERACTION WITH SWC4</scope>
</reference>
<reference key="11">
    <citation type="journal article" date="2004" name="Mol. Cell. Biol.">
        <title>The Yaf9 component of the SWR1 and NuA4 complexes is required for proper gene expression, histone H4 acetylation, and Htz1 replacement near telomeres.</title>
        <authorList>
            <person name="Zhang H."/>
            <person name="Richardson D.O."/>
            <person name="Roberts D.N."/>
            <person name="Utley R.T."/>
            <person name="Erdjument-Bromage H."/>
            <person name="Tempst P."/>
            <person name="Cote J."/>
            <person name="Cairns B.R."/>
        </authorList>
    </citation>
    <scope>FUNCTION</scope>
    <scope>SUBCELLULAR LOCATION</scope>
    <scope>IDENTIFICATION IN THE NUA4 COMPLEX</scope>
    <scope>IDENTIFICATION BY MASS SPECTROMETRY</scope>
</reference>
<reference key="12">
    <citation type="journal article" date="2004" name="PLoS Biol.">
        <title>A protein complex containing the conserved Swi2/Snf2-related ATPase Swr1p deposits histone variant H2A.Z into euchromatin.</title>
        <authorList>
            <person name="Kobor M.S."/>
            <person name="Venkatasubrahmanyam S."/>
            <person name="Meneghini M.D."/>
            <person name="Gin J.W."/>
            <person name="Jennings J.L."/>
            <person name="Link A.J."/>
            <person name="Madhani H.D."/>
            <person name="Rine J."/>
        </authorList>
    </citation>
    <scope>FUNCTION</scope>
    <scope>IDENTIFICATION IN THE SWR1 COMPLEX</scope>
    <scope>IDENTIFICATION IN THE NUA4 COMPLEX</scope>
    <scope>IDENTIFICATION BY MASS SPECTROMETRY</scope>
</reference>
<reference key="13">
    <citation type="journal article" date="2004" name="Proc. Natl. Acad. Sci. U.S.A.">
        <title>Regulation of chromosome stability by the histone H2A variant Htz1, the Swr1 chromatin remodeling complex, and the histone acetyltransferase NuA4.</title>
        <authorList>
            <person name="Krogan N.J."/>
            <person name="Baetz K."/>
            <person name="Keogh M.-C."/>
            <person name="Datta N."/>
            <person name="Sawa C."/>
            <person name="Kwok T.C.Y."/>
            <person name="Thompson N.J."/>
            <person name="Davey M.G."/>
            <person name="Pootoolal J."/>
            <person name="Hughes T.R."/>
            <person name="Emili A."/>
            <person name="Buratowski S."/>
            <person name="Hieter P."/>
            <person name="Greenblatt J.F."/>
        </authorList>
    </citation>
    <scope>IDENTIFICATION IN THE NUA4 COMPLEX</scope>
    <scope>IDENTIFICATION BY MASS SPECTROMETRY</scope>
</reference>
<reference key="14">
    <citation type="journal article" date="2004" name="Science">
        <title>ATP-driven exchange of histone H2AZ variant catalyzed by SWR1 chromatin remodeling complex.</title>
        <authorList>
            <person name="Mizuguchi G."/>
            <person name="Shen X."/>
            <person name="Landry J."/>
            <person name="Wu W.-H."/>
            <person name="Sen S."/>
            <person name="Wu C."/>
        </authorList>
    </citation>
    <scope>IDENTIFICATION IN THE SWR1 COMPLEX</scope>
    <scope>FUNCTION OF THE SWR1 COMPLEX</scope>
    <scope>IDENTIFICATION BY MASS SPECTROMETRY</scope>
</reference>
<sequence>MAPTISKRIKTLSVSRPIIYGNTAKKMGSVKPPNAPAEHTHLWTIFVRGPQNEDISYFIKKVVFKLHDTYPNPVRSIEAPPFELTETGWGEFDINIKVYFVEEANEKVLNFYHRLRLHPYANPVPNSDNGNEQNTTDHNSKDAEVSSVYFDEIVFNEPNEEFFKILMSRPGNLLPSNKTDDCVYSKQLEQEEIDRIEIGIEKVDKEIDELKQKLENLVKQEAINGS</sequence>
<dbReference type="EMBL" id="Z69382">
    <property type="protein sequence ID" value="CAA93400.1"/>
    <property type="molecule type" value="Genomic_DNA"/>
</dbReference>
<dbReference type="EMBL" id="Z71383">
    <property type="protein sequence ID" value="CAA95984.1"/>
    <property type="molecule type" value="Genomic_DNA"/>
</dbReference>
<dbReference type="EMBL" id="AY693049">
    <property type="protein sequence ID" value="AAT93068.1"/>
    <property type="molecule type" value="Genomic_DNA"/>
</dbReference>
<dbReference type="EMBL" id="BK006947">
    <property type="protein sequence ID" value="DAA10439.1"/>
    <property type="molecule type" value="Genomic_DNA"/>
</dbReference>
<dbReference type="PIR" id="S63048">
    <property type="entry name" value="S63048"/>
</dbReference>
<dbReference type="RefSeq" id="NP_014292.3">
    <property type="nucleotide sequence ID" value="NM_001182945.3"/>
</dbReference>
<dbReference type="PDB" id="3FK3">
    <property type="method" value="X-ray"/>
    <property type="resolution" value="2.30 A"/>
    <property type="chains" value="A/B/C=8-169"/>
</dbReference>
<dbReference type="PDB" id="3RLS">
    <property type="method" value="X-ray"/>
    <property type="resolution" value="1.70 A"/>
    <property type="chains" value="A/B=9-176"/>
</dbReference>
<dbReference type="PDB" id="6AXJ">
    <property type="method" value="X-ray"/>
    <property type="resolution" value="2.38 A"/>
    <property type="chains" value="A/B/C/D=8-171"/>
</dbReference>
<dbReference type="PDBsum" id="3FK3"/>
<dbReference type="PDBsum" id="3RLS"/>
<dbReference type="PDBsum" id="6AXJ"/>
<dbReference type="SMR" id="P53930"/>
<dbReference type="BioGRID" id="35717">
    <property type="interactions" value="457"/>
</dbReference>
<dbReference type="ComplexPortal" id="CPX-2122">
    <property type="entry name" value="Swr1 chromatin remodelling complex"/>
</dbReference>
<dbReference type="ComplexPortal" id="CPX-3155">
    <property type="entry name" value="NuA4 histone acetyltransferase complex"/>
</dbReference>
<dbReference type="DIP" id="DIP-4347N"/>
<dbReference type="FunCoup" id="P53930">
    <property type="interactions" value="850"/>
</dbReference>
<dbReference type="IntAct" id="P53930">
    <property type="interactions" value="36"/>
</dbReference>
<dbReference type="MINT" id="P53930"/>
<dbReference type="STRING" id="4932.YNL107W"/>
<dbReference type="iPTMnet" id="P53930"/>
<dbReference type="PaxDb" id="4932-YNL107W"/>
<dbReference type="PeptideAtlas" id="P53930"/>
<dbReference type="EnsemblFungi" id="YNL107W_mRNA">
    <property type="protein sequence ID" value="YNL107W"/>
    <property type="gene ID" value="YNL107W"/>
</dbReference>
<dbReference type="GeneID" id="855616"/>
<dbReference type="KEGG" id="sce:YNL107W"/>
<dbReference type="AGR" id="SGD:S000005051"/>
<dbReference type="SGD" id="S000005051">
    <property type="gene designation" value="YAF9"/>
</dbReference>
<dbReference type="VEuPathDB" id="FungiDB:YNL107W"/>
<dbReference type="eggNOG" id="KOG3149">
    <property type="taxonomic scope" value="Eukaryota"/>
</dbReference>
<dbReference type="HOGENOM" id="CLU_051385_2_1_1"/>
<dbReference type="InParanoid" id="P53930"/>
<dbReference type="OMA" id="VKPYHNE"/>
<dbReference type="OrthoDB" id="16041at2759"/>
<dbReference type="BioCyc" id="YEAST:G3O-33132-MONOMER"/>
<dbReference type="BRENDA" id="2.3.1.48">
    <property type="organism ID" value="984"/>
</dbReference>
<dbReference type="BioGRID-ORCS" id="855616">
    <property type="hits" value="0 hits in 10 CRISPR screens"/>
</dbReference>
<dbReference type="EvolutionaryTrace" id="P53930"/>
<dbReference type="PRO" id="PR:P53930"/>
<dbReference type="Proteomes" id="UP000002311">
    <property type="component" value="Chromosome XIV"/>
</dbReference>
<dbReference type="RNAct" id="P53930">
    <property type="molecule type" value="protein"/>
</dbReference>
<dbReference type="GO" id="GO:0000785">
    <property type="term" value="C:chromatin"/>
    <property type="evidence" value="ECO:0000314"/>
    <property type="project" value="ComplexPortal"/>
</dbReference>
<dbReference type="GO" id="GO:0000781">
    <property type="term" value="C:chromosome, telomeric region"/>
    <property type="evidence" value="ECO:0007669"/>
    <property type="project" value="GOC"/>
</dbReference>
<dbReference type="GO" id="GO:0005737">
    <property type="term" value="C:cytoplasm"/>
    <property type="evidence" value="ECO:0007005"/>
    <property type="project" value="SGD"/>
</dbReference>
<dbReference type="GO" id="GO:0035267">
    <property type="term" value="C:NuA4 histone acetyltransferase complex"/>
    <property type="evidence" value="ECO:0000314"/>
    <property type="project" value="SGD"/>
</dbReference>
<dbReference type="GO" id="GO:0005634">
    <property type="term" value="C:nucleus"/>
    <property type="evidence" value="ECO:0007005"/>
    <property type="project" value="SGD"/>
</dbReference>
<dbReference type="GO" id="GO:0000812">
    <property type="term" value="C:Swr1 complex"/>
    <property type="evidence" value="ECO:0000314"/>
    <property type="project" value="SGD"/>
</dbReference>
<dbReference type="GO" id="GO:0042393">
    <property type="term" value="F:histone binding"/>
    <property type="evidence" value="ECO:0000318"/>
    <property type="project" value="GO_Central"/>
</dbReference>
<dbReference type="GO" id="GO:0006338">
    <property type="term" value="P:chromatin remodeling"/>
    <property type="evidence" value="ECO:0000314"/>
    <property type="project" value="SGD"/>
</dbReference>
<dbReference type="GO" id="GO:0006281">
    <property type="term" value="P:DNA repair"/>
    <property type="evidence" value="ECO:0000314"/>
    <property type="project" value="SGD"/>
</dbReference>
<dbReference type="GO" id="GO:0006351">
    <property type="term" value="P:DNA-templated transcription"/>
    <property type="evidence" value="ECO:0000303"/>
    <property type="project" value="ComplexPortal"/>
</dbReference>
<dbReference type="GO" id="GO:0006355">
    <property type="term" value="P:regulation of DNA-templated transcription"/>
    <property type="evidence" value="ECO:0000303"/>
    <property type="project" value="ComplexPortal"/>
</dbReference>
<dbReference type="GO" id="GO:0006357">
    <property type="term" value="P:regulation of transcription by RNA polymerase II"/>
    <property type="evidence" value="ECO:0000318"/>
    <property type="project" value="GO_Central"/>
</dbReference>
<dbReference type="GO" id="GO:0031509">
    <property type="term" value="P:subtelomeric heterochromatin formation"/>
    <property type="evidence" value="ECO:0000315"/>
    <property type="project" value="SGD"/>
</dbReference>
<dbReference type="CDD" id="cd16908">
    <property type="entry name" value="YEATS_Yaf9_like"/>
    <property type="match status" value="1"/>
</dbReference>
<dbReference type="FunFam" id="2.60.40.1970:FF:000007">
    <property type="entry name" value="Protein AF-9 homolog"/>
    <property type="match status" value="1"/>
</dbReference>
<dbReference type="Gene3D" id="2.60.40.1970">
    <property type="entry name" value="YEATS domain"/>
    <property type="match status" value="1"/>
</dbReference>
<dbReference type="InterPro" id="IPR038704">
    <property type="entry name" value="YEAST_sf"/>
</dbReference>
<dbReference type="InterPro" id="IPR005033">
    <property type="entry name" value="YEATS"/>
</dbReference>
<dbReference type="InterPro" id="IPR055129">
    <property type="entry name" value="YEATS_dom"/>
</dbReference>
<dbReference type="PANTHER" id="PTHR47573">
    <property type="entry name" value="PROTEIN AF-9 HOMOLOG"/>
    <property type="match status" value="1"/>
</dbReference>
<dbReference type="PANTHER" id="PTHR47573:SF1">
    <property type="entry name" value="PROTEIN AF-9 HOMOLOG"/>
    <property type="match status" value="1"/>
</dbReference>
<dbReference type="Pfam" id="PF03366">
    <property type="entry name" value="YEATS"/>
    <property type="match status" value="1"/>
</dbReference>
<dbReference type="PROSITE" id="PS51037">
    <property type="entry name" value="YEATS"/>
    <property type="match status" value="1"/>
</dbReference>
<feature type="chain" id="PRO_0000215934" description="Protein AF-9 homolog">
    <location>
        <begin position="1"/>
        <end position="226"/>
    </location>
</feature>
<feature type="domain" description="YEATS" evidence="2">
    <location>
        <begin position="8"/>
        <end position="169"/>
    </location>
</feature>
<feature type="coiled-coil region" evidence="1">
    <location>
        <begin position="187"/>
        <end position="224"/>
    </location>
</feature>
<feature type="sequence conflict" description="In Ref. 4; AAT93068." evidence="11" ref="4">
    <original>K</original>
    <variation>R</variation>
    <location>
        <position position="65"/>
    </location>
</feature>
<feature type="strand" evidence="12">
    <location>
        <begin position="8"/>
        <end position="11"/>
    </location>
</feature>
<feature type="strand" evidence="13">
    <location>
        <begin position="14"/>
        <end position="26"/>
    </location>
</feature>
<feature type="strand" evidence="13">
    <location>
        <begin position="41"/>
        <end position="48"/>
    </location>
</feature>
<feature type="helix" evidence="13">
    <location>
        <begin position="50"/>
        <end position="52"/>
    </location>
</feature>
<feature type="turn" evidence="13">
    <location>
        <begin position="56"/>
        <end position="58"/>
    </location>
</feature>
<feature type="strand" evidence="13">
    <location>
        <begin position="59"/>
        <end position="65"/>
    </location>
</feature>
<feature type="strand" evidence="13">
    <location>
        <begin position="70"/>
        <end position="72"/>
    </location>
</feature>
<feature type="strand" evidence="13">
    <location>
        <begin position="74"/>
        <end position="77"/>
    </location>
</feature>
<feature type="strand" evidence="13">
    <location>
        <begin position="79"/>
        <end position="90"/>
    </location>
</feature>
<feature type="strand" evidence="13">
    <location>
        <begin position="93"/>
        <end position="100"/>
    </location>
</feature>
<feature type="helix" evidence="13">
    <location>
        <begin position="102"/>
        <end position="104"/>
    </location>
</feature>
<feature type="strand" evidence="13">
    <location>
        <begin position="109"/>
        <end position="114"/>
    </location>
</feature>
<feature type="strand" evidence="13">
    <location>
        <begin position="145"/>
        <end position="157"/>
    </location>
</feature>
<feature type="helix" evidence="13">
    <location>
        <begin position="160"/>
        <end position="168"/>
    </location>
</feature>
<gene>
    <name type="primary">YAF9</name>
    <name type="ordered locus">YNL107W</name>
    <name type="ORF">N1966</name>
</gene>
<proteinExistence type="evidence at protein level"/>
<name>AF9_YEAST</name>
<evidence type="ECO:0000255" key="1"/>
<evidence type="ECO:0000255" key="2">
    <source>
        <dbReference type="PROSITE-ProRule" id="PRU00376"/>
    </source>
</evidence>
<evidence type="ECO:0000269" key="3">
    <source>
    </source>
</evidence>
<evidence type="ECO:0000269" key="4">
    <source>
    </source>
</evidence>
<evidence type="ECO:0000269" key="5">
    <source>
    </source>
</evidence>
<evidence type="ECO:0000269" key="6">
    <source>
    </source>
</evidence>
<evidence type="ECO:0000269" key="7">
    <source>
    </source>
</evidence>
<evidence type="ECO:0000269" key="8">
    <source>
    </source>
</evidence>
<evidence type="ECO:0000269" key="9">
    <source>
    </source>
</evidence>
<evidence type="ECO:0000269" key="10">
    <source>
    </source>
</evidence>
<evidence type="ECO:0000305" key="11"/>
<evidence type="ECO:0007829" key="12">
    <source>
        <dbReference type="PDB" id="3FK3"/>
    </source>
</evidence>
<evidence type="ECO:0007829" key="13">
    <source>
        <dbReference type="PDB" id="3RLS"/>
    </source>
</evidence>